<feature type="chain" id="PRO_1000213941" description="Uracil phosphoribosyltransferase">
    <location>
        <begin position="1"/>
        <end position="216"/>
    </location>
</feature>
<feature type="binding site" evidence="1">
    <location>
        <begin position="30"/>
        <end position="34"/>
    </location>
    <ligand>
        <name>GTP</name>
        <dbReference type="ChEBI" id="CHEBI:37565"/>
    </ligand>
</feature>
<feature type="binding site" evidence="1">
    <location>
        <position position="80"/>
    </location>
    <ligand>
        <name>5-phospho-alpha-D-ribose 1-diphosphate</name>
        <dbReference type="ChEBI" id="CHEBI:58017"/>
    </ligand>
</feature>
<feature type="binding site" evidence="1">
    <location>
        <position position="105"/>
    </location>
    <ligand>
        <name>5-phospho-alpha-D-ribose 1-diphosphate</name>
        <dbReference type="ChEBI" id="CHEBI:58017"/>
    </ligand>
</feature>
<feature type="binding site" evidence="1">
    <location>
        <begin position="140"/>
        <end position="148"/>
    </location>
    <ligand>
        <name>5-phospho-alpha-D-ribose 1-diphosphate</name>
        <dbReference type="ChEBI" id="CHEBI:58017"/>
    </ligand>
</feature>
<feature type="binding site" evidence="1">
    <location>
        <position position="203"/>
    </location>
    <ligand>
        <name>uracil</name>
        <dbReference type="ChEBI" id="CHEBI:17568"/>
    </ligand>
</feature>
<feature type="binding site" evidence="1">
    <location>
        <begin position="208"/>
        <end position="210"/>
    </location>
    <ligand>
        <name>uracil</name>
        <dbReference type="ChEBI" id="CHEBI:17568"/>
    </ligand>
</feature>
<feature type="binding site" evidence="1">
    <location>
        <position position="209"/>
    </location>
    <ligand>
        <name>5-phospho-alpha-D-ribose 1-diphosphate</name>
        <dbReference type="ChEBI" id="CHEBI:58017"/>
    </ligand>
</feature>
<comment type="function">
    <text evidence="1">Catalyzes the conversion of uracil and 5-phospho-alpha-D-ribose 1-diphosphate (PRPP) to UMP and diphosphate.</text>
</comment>
<comment type="catalytic activity">
    <reaction evidence="1">
        <text>UMP + diphosphate = 5-phospho-alpha-D-ribose 1-diphosphate + uracil</text>
        <dbReference type="Rhea" id="RHEA:13017"/>
        <dbReference type="ChEBI" id="CHEBI:17568"/>
        <dbReference type="ChEBI" id="CHEBI:33019"/>
        <dbReference type="ChEBI" id="CHEBI:57865"/>
        <dbReference type="ChEBI" id="CHEBI:58017"/>
        <dbReference type="EC" id="2.4.2.9"/>
    </reaction>
</comment>
<comment type="cofactor">
    <cofactor evidence="1">
        <name>Mg(2+)</name>
        <dbReference type="ChEBI" id="CHEBI:18420"/>
    </cofactor>
    <text evidence="1">Binds 1 Mg(2+) ion per subunit. The magnesium is bound as Mg-PRPP.</text>
</comment>
<comment type="activity regulation">
    <text evidence="1">Allosterically activated by GTP.</text>
</comment>
<comment type="pathway">
    <text evidence="1">Pyrimidine metabolism; UMP biosynthesis via salvage pathway; UMP from uracil: step 1/1.</text>
</comment>
<comment type="similarity">
    <text evidence="1">Belongs to the UPRTase family.</text>
</comment>
<reference key="1">
    <citation type="journal article" date="2009" name="Proc. Natl. Acad. Sci. U.S.A.">
        <title>Biogeography of the Sulfolobus islandicus pan-genome.</title>
        <authorList>
            <person name="Reno M.L."/>
            <person name="Held N.L."/>
            <person name="Fields C.J."/>
            <person name="Burke P.V."/>
            <person name="Whitaker R.J."/>
        </authorList>
    </citation>
    <scope>NUCLEOTIDE SEQUENCE [LARGE SCALE GENOMIC DNA]</scope>
    <source>
        <strain>L.S.2.15 / Lassen #1</strain>
    </source>
</reference>
<organism>
    <name type="scientific">Saccharolobus islandicus (strain L.S.2.15 / Lassen #1)</name>
    <name type="common">Sulfolobus islandicus</name>
    <dbReference type="NCBI Taxonomy" id="429572"/>
    <lineage>
        <taxon>Archaea</taxon>
        <taxon>Thermoproteota</taxon>
        <taxon>Thermoprotei</taxon>
        <taxon>Sulfolobales</taxon>
        <taxon>Sulfolobaceae</taxon>
        <taxon>Saccharolobus</taxon>
    </lineage>
</organism>
<proteinExistence type="inferred from homology"/>
<dbReference type="EC" id="2.4.2.9" evidence="1"/>
<dbReference type="EMBL" id="CP001399">
    <property type="protein sequence ID" value="ACP36009.1"/>
    <property type="molecule type" value="Genomic_DNA"/>
</dbReference>
<dbReference type="RefSeq" id="WP_012711878.1">
    <property type="nucleotide sequence ID" value="NC_012589.1"/>
</dbReference>
<dbReference type="SMR" id="C3MRJ6"/>
<dbReference type="GeneID" id="84059260"/>
<dbReference type="KEGG" id="sis:LS215_2014"/>
<dbReference type="HOGENOM" id="CLU_067096_2_0_2"/>
<dbReference type="OrthoDB" id="80352at2157"/>
<dbReference type="UniPathway" id="UPA00574">
    <property type="reaction ID" value="UER00636"/>
</dbReference>
<dbReference type="Proteomes" id="UP000001747">
    <property type="component" value="Chromosome"/>
</dbReference>
<dbReference type="GO" id="GO:0005525">
    <property type="term" value="F:GTP binding"/>
    <property type="evidence" value="ECO:0007669"/>
    <property type="project" value="UniProtKB-KW"/>
</dbReference>
<dbReference type="GO" id="GO:0000287">
    <property type="term" value="F:magnesium ion binding"/>
    <property type="evidence" value="ECO:0007669"/>
    <property type="project" value="UniProtKB-UniRule"/>
</dbReference>
<dbReference type="GO" id="GO:0004845">
    <property type="term" value="F:uracil phosphoribosyltransferase activity"/>
    <property type="evidence" value="ECO:0007669"/>
    <property type="project" value="UniProtKB-UniRule"/>
</dbReference>
<dbReference type="GO" id="GO:0044206">
    <property type="term" value="P:UMP salvage"/>
    <property type="evidence" value="ECO:0007669"/>
    <property type="project" value="UniProtKB-UniRule"/>
</dbReference>
<dbReference type="GO" id="GO:0006223">
    <property type="term" value="P:uracil salvage"/>
    <property type="evidence" value="ECO:0007669"/>
    <property type="project" value="InterPro"/>
</dbReference>
<dbReference type="CDD" id="cd06223">
    <property type="entry name" value="PRTases_typeI"/>
    <property type="match status" value="1"/>
</dbReference>
<dbReference type="Gene3D" id="3.40.50.2020">
    <property type="match status" value="1"/>
</dbReference>
<dbReference type="HAMAP" id="MF_01218_A">
    <property type="entry name" value="Upp_A"/>
    <property type="match status" value="1"/>
</dbReference>
<dbReference type="InterPro" id="IPR000836">
    <property type="entry name" value="PRibTrfase_dom"/>
</dbReference>
<dbReference type="InterPro" id="IPR029057">
    <property type="entry name" value="PRTase-like"/>
</dbReference>
<dbReference type="InterPro" id="IPR034331">
    <property type="entry name" value="Upp_A"/>
</dbReference>
<dbReference type="InterPro" id="IPR005765">
    <property type="entry name" value="Ura_phspho_trans"/>
</dbReference>
<dbReference type="NCBIfam" id="NF001097">
    <property type="entry name" value="PRK00129.1"/>
    <property type="match status" value="1"/>
</dbReference>
<dbReference type="NCBIfam" id="TIGR01091">
    <property type="entry name" value="upp"/>
    <property type="match status" value="1"/>
</dbReference>
<dbReference type="Pfam" id="PF14681">
    <property type="entry name" value="UPRTase"/>
    <property type="match status" value="1"/>
</dbReference>
<dbReference type="SUPFAM" id="SSF53271">
    <property type="entry name" value="PRTase-like"/>
    <property type="match status" value="1"/>
</dbReference>
<keyword id="KW-0021">Allosteric enzyme</keyword>
<keyword id="KW-0328">Glycosyltransferase</keyword>
<keyword id="KW-0342">GTP-binding</keyword>
<keyword id="KW-0460">Magnesium</keyword>
<keyword id="KW-0547">Nucleotide-binding</keyword>
<keyword id="KW-0808">Transferase</keyword>
<gene>
    <name evidence="1" type="primary">upp</name>
    <name type="ordered locus">LS215_2014</name>
</gene>
<evidence type="ECO:0000255" key="1">
    <source>
        <dbReference type="HAMAP-Rule" id="MF_01218"/>
    </source>
</evidence>
<name>UPP_SACI2</name>
<accession>C3MRJ6</accession>
<protein>
    <recommendedName>
        <fullName evidence="1">Uracil phosphoribosyltransferase</fullName>
        <ecNumber evidence="1">2.4.2.9</ecNumber>
    </recommendedName>
    <alternativeName>
        <fullName evidence="1">UMP pyrophosphorylase</fullName>
    </alternativeName>
    <alternativeName>
        <fullName evidence="1">UPRTase</fullName>
    </alternativeName>
</protein>
<sequence length="216" mass="24128">MPLYVIDKPLTLHILTQLRDKNTDQINFRKNLVRLGRILGYEIANTLDYEIVEVETPLGARTKGIDITDLNNIVIINILRAAVPLVEGLLKAFPKARQGVIGASRVEVDGKEVPKDMDVYIYYKKIPNIRAKVDNVIIADPMIATASTMLKVLEEVVRANPKRIYIVSIISSEYGANKILSKYPFIYLFTVTIDPELNNKGYILPGLGDAGDRAFG</sequence>